<proteinExistence type="predicted"/>
<accession>P9WLB3</accession>
<accession>L0TAW6</accession>
<accession>P0A5G3</accession>
<accession>P71881</accession>
<protein>
    <recommendedName>
        <fullName>Uncharacterized protein Rv2331</fullName>
    </recommendedName>
</protein>
<organism>
    <name type="scientific">Mycobacterium tuberculosis (strain ATCC 25618 / H37Rv)</name>
    <dbReference type="NCBI Taxonomy" id="83332"/>
    <lineage>
        <taxon>Bacteria</taxon>
        <taxon>Bacillati</taxon>
        <taxon>Actinomycetota</taxon>
        <taxon>Actinomycetes</taxon>
        <taxon>Mycobacteriales</taxon>
        <taxon>Mycobacteriaceae</taxon>
        <taxon>Mycobacterium</taxon>
        <taxon>Mycobacterium tuberculosis complex</taxon>
    </lineage>
</organism>
<name>Y2331_MYCTU</name>
<sequence length="128" mass="13736">MPPVFLPQIGRLTPDAVGEAIGIAADDIPMAARWIGSRPCSLIGQPNTMGDEMGYLGPGLAGQRCVDRLVMGASRSTCSRLPVIASVDERLSVLKPVRPRLHSISFIFKGRPGEVYLTVTGYNFRGVP</sequence>
<gene>
    <name type="ordered locus">Rv2331</name>
    <name type="ORF">MTCY3G12.03c</name>
</gene>
<reference key="1">
    <citation type="journal article" date="1998" name="Nature">
        <title>Deciphering the biology of Mycobacterium tuberculosis from the complete genome sequence.</title>
        <authorList>
            <person name="Cole S.T."/>
            <person name="Brosch R."/>
            <person name="Parkhill J."/>
            <person name="Garnier T."/>
            <person name="Churcher C.M."/>
            <person name="Harris D.E."/>
            <person name="Gordon S.V."/>
            <person name="Eiglmeier K."/>
            <person name="Gas S."/>
            <person name="Barry C.E. III"/>
            <person name="Tekaia F."/>
            <person name="Badcock K."/>
            <person name="Basham D."/>
            <person name="Brown D."/>
            <person name="Chillingworth T."/>
            <person name="Connor R."/>
            <person name="Davies R.M."/>
            <person name="Devlin K."/>
            <person name="Feltwell T."/>
            <person name="Gentles S."/>
            <person name="Hamlin N."/>
            <person name="Holroyd S."/>
            <person name="Hornsby T."/>
            <person name="Jagels K."/>
            <person name="Krogh A."/>
            <person name="McLean J."/>
            <person name="Moule S."/>
            <person name="Murphy L.D."/>
            <person name="Oliver S."/>
            <person name="Osborne J."/>
            <person name="Quail M.A."/>
            <person name="Rajandream M.A."/>
            <person name="Rogers J."/>
            <person name="Rutter S."/>
            <person name="Seeger K."/>
            <person name="Skelton S."/>
            <person name="Squares S."/>
            <person name="Squares R."/>
            <person name="Sulston J.E."/>
            <person name="Taylor K."/>
            <person name="Whitehead S."/>
            <person name="Barrell B.G."/>
        </authorList>
    </citation>
    <scope>NUCLEOTIDE SEQUENCE [LARGE SCALE GENOMIC DNA]</scope>
    <source>
        <strain>ATCC 25618 / H37Rv</strain>
    </source>
</reference>
<feature type="chain" id="PRO_0000104030" description="Uncharacterized protein Rv2331">
    <location>
        <begin position="1"/>
        <end position="128"/>
    </location>
</feature>
<dbReference type="EMBL" id="AL123456">
    <property type="protein sequence ID" value="CCP45118.1"/>
    <property type="molecule type" value="Genomic_DNA"/>
</dbReference>
<dbReference type="PIR" id="D70705">
    <property type="entry name" value="D70705"/>
</dbReference>
<dbReference type="RefSeq" id="NP_216847.1">
    <property type="nucleotide sequence ID" value="NC_000962.3"/>
</dbReference>
<dbReference type="RefSeq" id="WP_003411975.1">
    <property type="nucleotide sequence ID" value="NZ_NVQJ01000012.1"/>
</dbReference>
<dbReference type="STRING" id="83332.Rv2331"/>
<dbReference type="PaxDb" id="83332-Rv2331"/>
<dbReference type="DNASU" id="888099"/>
<dbReference type="GeneID" id="888099"/>
<dbReference type="KEGG" id="mtu:Rv2331"/>
<dbReference type="KEGG" id="mtv:RVBD_2331"/>
<dbReference type="TubercuList" id="Rv2331"/>
<dbReference type="InParanoid" id="P9WLB3"/>
<dbReference type="OrthoDB" id="7376058at2"/>
<dbReference type="Proteomes" id="UP000001584">
    <property type="component" value="Chromosome"/>
</dbReference>
<dbReference type="SUPFAM" id="SSF53706">
    <property type="entry name" value="Formate dehydrogenase/DMSO reductase, domains 1-3"/>
    <property type="match status" value="1"/>
</dbReference>
<keyword id="KW-1185">Reference proteome</keyword>